<keyword id="KW-0067">ATP-binding</keyword>
<keyword id="KW-0963">Cytoplasm</keyword>
<keyword id="KW-0227">DNA damage</keyword>
<keyword id="KW-0228">DNA excision</keyword>
<keyword id="KW-0234">DNA repair</keyword>
<keyword id="KW-0267">Excision nuclease</keyword>
<keyword id="KW-0547">Nucleotide-binding</keyword>
<keyword id="KW-1185">Reference proteome</keyword>
<keyword id="KW-0742">SOS response</keyword>
<comment type="function">
    <text evidence="1">The UvrABC repair system catalyzes the recognition and processing of DNA lesions. A damage recognition complex composed of 2 UvrA and 2 UvrB subunits scans DNA for abnormalities. Upon binding of the UvrA(2)B(2) complex to a putative damaged site, the DNA wraps around one UvrB monomer. DNA wrap is dependent on ATP binding by UvrB and probably causes local melting of the DNA helix, facilitating insertion of UvrB beta-hairpin between the DNA strands. Then UvrB probes one DNA strand for the presence of a lesion. If a lesion is found the UvrA subunits dissociate and the UvrB-DNA preincision complex is formed. This complex is subsequently bound by UvrC and the second UvrB is released. If no lesion is found, the DNA wraps around the other UvrB subunit that will check the other stand for damage.</text>
</comment>
<comment type="subunit">
    <text evidence="1">Forms a heterotetramer with UvrA during the search for lesions. Interacts with UvrC in an incision complex.</text>
</comment>
<comment type="subcellular location">
    <subcellularLocation>
        <location evidence="1">Cytoplasm</location>
    </subcellularLocation>
</comment>
<comment type="domain">
    <text evidence="1">The beta-hairpin motif is involved in DNA binding.</text>
</comment>
<comment type="similarity">
    <text evidence="1">Belongs to the UvrB family.</text>
</comment>
<organism>
    <name type="scientific">Streptococcus agalactiae serotype V (strain ATCC BAA-611 / 2603 V/R)</name>
    <dbReference type="NCBI Taxonomy" id="208435"/>
    <lineage>
        <taxon>Bacteria</taxon>
        <taxon>Bacillati</taxon>
        <taxon>Bacillota</taxon>
        <taxon>Bacilli</taxon>
        <taxon>Lactobacillales</taxon>
        <taxon>Streptococcaceae</taxon>
        <taxon>Streptococcus</taxon>
    </lineage>
</organism>
<proteinExistence type="inferred from homology"/>
<name>UVRB_STRA5</name>
<reference key="1">
    <citation type="journal article" date="2002" name="Proc. Natl. Acad. Sci. U.S.A.">
        <title>Complete genome sequence and comparative genomic analysis of an emerging human pathogen, serotype V Streptococcus agalactiae.</title>
        <authorList>
            <person name="Tettelin H."/>
            <person name="Masignani V."/>
            <person name="Cieslewicz M.J."/>
            <person name="Eisen J.A."/>
            <person name="Peterson S.N."/>
            <person name="Wessels M.R."/>
            <person name="Paulsen I.T."/>
            <person name="Nelson K.E."/>
            <person name="Margarit I."/>
            <person name="Read T.D."/>
            <person name="Madoff L.C."/>
            <person name="Wolf A.M."/>
            <person name="Beanan M.J."/>
            <person name="Brinkac L.M."/>
            <person name="Daugherty S.C."/>
            <person name="DeBoy R.T."/>
            <person name="Durkin A.S."/>
            <person name="Kolonay J.F."/>
            <person name="Madupu R."/>
            <person name="Lewis M.R."/>
            <person name="Radune D."/>
            <person name="Fedorova N.B."/>
            <person name="Scanlan D."/>
            <person name="Khouri H.M."/>
            <person name="Mulligan S."/>
            <person name="Carty H.A."/>
            <person name="Cline R.T."/>
            <person name="Van Aken S.E."/>
            <person name="Gill J."/>
            <person name="Scarselli M."/>
            <person name="Mora M."/>
            <person name="Iacobini E.T."/>
            <person name="Brettoni C."/>
            <person name="Galli G."/>
            <person name="Mariani M."/>
            <person name="Vegni F."/>
            <person name="Maione D."/>
            <person name="Rinaudo D."/>
            <person name="Rappuoli R."/>
            <person name="Telford J.L."/>
            <person name="Kasper D.L."/>
            <person name="Grandi G."/>
            <person name="Fraser C.M."/>
        </authorList>
    </citation>
    <scope>NUCLEOTIDE SEQUENCE [LARGE SCALE GENOMIC DNA]</scope>
    <source>
        <strain>ATCC BAA-611 / 2603 V/R</strain>
    </source>
</reference>
<dbReference type="EMBL" id="AE009948">
    <property type="protein sequence ID" value="AAN00331.1"/>
    <property type="molecule type" value="Genomic_DNA"/>
</dbReference>
<dbReference type="RefSeq" id="NP_688458.1">
    <property type="nucleotide sequence ID" value="NC_004116.1"/>
</dbReference>
<dbReference type="RefSeq" id="WP_000567072.1">
    <property type="nucleotide sequence ID" value="NC_004116.1"/>
</dbReference>
<dbReference type="SMR" id="Q8DYL6"/>
<dbReference type="STRING" id="208435.SAG1464"/>
<dbReference type="KEGG" id="sag:SAG1464"/>
<dbReference type="PATRIC" id="fig|208435.3.peg.1474"/>
<dbReference type="HOGENOM" id="CLU_009621_2_1_9"/>
<dbReference type="OrthoDB" id="9806651at2"/>
<dbReference type="PHI-base" id="PHI:11576"/>
<dbReference type="Proteomes" id="UP000000821">
    <property type="component" value="Chromosome"/>
</dbReference>
<dbReference type="GO" id="GO:0005737">
    <property type="term" value="C:cytoplasm"/>
    <property type="evidence" value="ECO:0007669"/>
    <property type="project" value="UniProtKB-SubCell"/>
</dbReference>
<dbReference type="GO" id="GO:0009380">
    <property type="term" value="C:excinuclease repair complex"/>
    <property type="evidence" value="ECO:0007669"/>
    <property type="project" value="InterPro"/>
</dbReference>
<dbReference type="GO" id="GO:0005524">
    <property type="term" value="F:ATP binding"/>
    <property type="evidence" value="ECO:0007669"/>
    <property type="project" value="UniProtKB-UniRule"/>
</dbReference>
<dbReference type="GO" id="GO:0016887">
    <property type="term" value="F:ATP hydrolysis activity"/>
    <property type="evidence" value="ECO:0007669"/>
    <property type="project" value="InterPro"/>
</dbReference>
<dbReference type="GO" id="GO:0003677">
    <property type="term" value="F:DNA binding"/>
    <property type="evidence" value="ECO:0007669"/>
    <property type="project" value="UniProtKB-UniRule"/>
</dbReference>
<dbReference type="GO" id="GO:0009381">
    <property type="term" value="F:excinuclease ABC activity"/>
    <property type="evidence" value="ECO:0007669"/>
    <property type="project" value="UniProtKB-UniRule"/>
</dbReference>
<dbReference type="GO" id="GO:0006289">
    <property type="term" value="P:nucleotide-excision repair"/>
    <property type="evidence" value="ECO:0007669"/>
    <property type="project" value="UniProtKB-UniRule"/>
</dbReference>
<dbReference type="GO" id="GO:0009432">
    <property type="term" value="P:SOS response"/>
    <property type="evidence" value="ECO:0007669"/>
    <property type="project" value="UniProtKB-UniRule"/>
</dbReference>
<dbReference type="CDD" id="cd17916">
    <property type="entry name" value="DEXHc_UvrB"/>
    <property type="match status" value="1"/>
</dbReference>
<dbReference type="CDD" id="cd18790">
    <property type="entry name" value="SF2_C_UvrB"/>
    <property type="match status" value="1"/>
</dbReference>
<dbReference type="Gene3D" id="3.40.50.300">
    <property type="entry name" value="P-loop containing nucleotide triphosphate hydrolases"/>
    <property type="match status" value="3"/>
</dbReference>
<dbReference type="Gene3D" id="4.10.860.10">
    <property type="entry name" value="UVR domain"/>
    <property type="match status" value="1"/>
</dbReference>
<dbReference type="HAMAP" id="MF_00204">
    <property type="entry name" value="UvrB"/>
    <property type="match status" value="1"/>
</dbReference>
<dbReference type="InterPro" id="IPR006935">
    <property type="entry name" value="Helicase/UvrB_N"/>
</dbReference>
<dbReference type="InterPro" id="IPR014001">
    <property type="entry name" value="Helicase_ATP-bd"/>
</dbReference>
<dbReference type="InterPro" id="IPR001650">
    <property type="entry name" value="Helicase_C-like"/>
</dbReference>
<dbReference type="InterPro" id="IPR027417">
    <property type="entry name" value="P-loop_NTPase"/>
</dbReference>
<dbReference type="InterPro" id="IPR001943">
    <property type="entry name" value="UVR_dom"/>
</dbReference>
<dbReference type="InterPro" id="IPR036876">
    <property type="entry name" value="UVR_dom_sf"/>
</dbReference>
<dbReference type="InterPro" id="IPR004807">
    <property type="entry name" value="UvrB"/>
</dbReference>
<dbReference type="InterPro" id="IPR041471">
    <property type="entry name" value="UvrB_inter"/>
</dbReference>
<dbReference type="InterPro" id="IPR024759">
    <property type="entry name" value="UvrB_YAD/RRR_dom"/>
</dbReference>
<dbReference type="NCBIfam" id="NF003673">
    <property type="entry name" value="PRK05298.1"/>
    <property type="match status" value="1"/>
</dbReference>
<dbReference type="NCBIfam" id="TIGR00631">
    <property type="entry name" value="uvrb"/>
    <property type="match status" value="1"/>
</dbReference>
<dbReference type="PANTHER" id="PTHR24029">
    <property type="entry name" value="UVRABC SYSTEM PROTEIN B"/>
    <property type="match status" value="1"/>
</dbReference>
<dbReference type="PANTHER" id="PTHR24029:SF0">
    <property type="entry name" value="UVRABC SYSTEM PROTEIN B"/>
    <property type="match status" value="1"/>
</dbReference>
<dbReference type="Pfam" id="PF00271">
    <property type="entry name" value="Helicase_C"/>
    <property type="match status" value="1"/>
</dbReference>
<dbReference type="Pfam" id="PF04851">
    <property type="entry name" value="ResIII"/>
    <property type="match status" value="1"/>
</dbReference>
<dbReference type="Pfam" id="PF02151">
    <property type="entry name" value="UVR"/>
    <property type="match status" value="1"/>
</dbReference>
<dbReference type="Pfam" id="PF12344">
    <property type="entry name" value="UvrB"/>
    <property type="match status" value="1"/>
</dbReference>
<dbReference type="Pfam" id="PF17757">
    <property type="entry name" value="UvrB_inter"/>
    <property type="match status" value="1"/>
</dbReference>
<dbReference type="SMART" id="SM00487">
    <property type="entry name" value="DEXDc"/>
    <property type="match status" value="1"/>
</dbReference>
<dbReference type="SMART" id="SM00490">
    <property type="entry name" value="HELICc"/>
    <property type="match status" value="1"/>
</dbReference>
<dbReference type="SUPFAM" id="SSF46600">
    <property type="entry name" value="C-terminal UvrC-binding domain of UvrB"/>
    <property type="match status" value="1"/>
</dbReference>
<dbReference type="SUPFAM" id="SSF52540">
    <property type="entry name" value="P-loop containing nucleoside triphosphate hydrolases"/>
    <property type="match status" value="2"/>
</dbReference>
<dbReference type="PROSITE" id="PS51192">
    <property type="entry name" value="HELICASE_ATP_BIND_1"/>
    <property type="match status" value="1"/>
</dbReference>
<dbReference type="PROSITE" id="PS51194">
    <property type="entry name" value="HELICASE_CTER"/>
    <property type="match status" value="1"/>
</dbReference>
<dbReference type="PROSITE" id="PS50151">
    <property type="entry name" value="UVR"/>
    <property type="match status" value="1"/>
</dbReference>
<feature type="chain" id="PRO_0000227367" description="UvrABC system protein B">
    <location>
        <begin position="1"/>
        <end position="663"/>
    </location>
</feature>
<feature type="domain" description="Helicase ATP-binding" evidence="1">
    <location>
        <begin position="31"/>
        <end position="418"/>
    </location>
</feature>
<feature type="domain" description="Helicase C-terminal" evidence="1">
    <location>
        <begin position="435"/>
        <end position="601"/>
    </location>
</feature>
<feature type="domain" description="UVR" evidence="1">
    <location>
        <begin position="627"/>
        <end position="662"/>
    </location>
</feature>
<feature type="short sequence motif" description="Beta-hairpin">
    <location>
        <begin position="97"/>
        <end position="120"/>
    </location>
</feature>
<feature type="binding site" evidence="1">
    <location>
        <begin position="44"/>
        <end position="51"/>
    </location>
    <ligand>
        <name>ATP</name>
        <dbReference type="ChEBI" id="CHEBI:30616"/>
    </ligand>
</feature>
<accession>Q8DYL6</accession>
<protein>
    <recommendedName>
        <fullName evidence="1">UvrABC system protein B</fullName>
        <shortName evidence="1">Protein UvrB</shortName>
    </recommendedName>
    <alternativeName>
        <fullName evidence="1">Excinuclease ABC subunit B</fullName>
    </alternativeName>
</protein>
<evidence type="ECO:0000255" key="1">
    <source>
        <dbReference type="HAMAP-Rule" id="MF_00204"/>
    </source>
</evidence>
<sequence>MIDRKDTNRFKLVSKYSPSGDQPQAIETLVDNIEGGEKAQILKGATGTGKTYTMSQVIAQVNKPTLVIAHNKTLAGQLYGEFKEFFPDNAVEYFVSYYDYYQPEAYVPSSDTYIEKDSSVNDEIDKLRHSATSSLLERNDVIVVASVSCIYGLGSPKEYADSVVSLRPGQEISRDQLLNNLVDIQFERNDIDFQRGKFRVRGDVVEVFPASRDEHAFRIEFFGDEIDRIREIESLTGRVLGEVEHLAIFPATHFMTNDEHMEEAISKIQAEMENQVELFEKEGKLIEAQRIRQRTEYDIEMLREMGYTNGVENYSRHMDGRSEGEPPFTLLDFFPEDFLIMIDESHMTMGQIKGMYNGDRSRKEMLVNYGFRLPSALDNRPLRREEFESHVHQIVYVSATPGDYEMEQTDTVVEQIIRPTGLLDPEVEVRPSMGQMDDLLGEINLRTEKGERTFITTLTKRMAEDLTDYLKEMGVKVKYMHSDIKTLERTEIIRDLRLGVFDVLIGINLLREGIDVPEVSLVAILDADKEGFLRNERGLIQTIGRAARNSNGHVIMYADKITDSMQRAMDETARRRRLQMDYNEKHGIVPQTIKKEIRDLIAITKSNDSDKPEKVVDYSSLSKKERQAEIKALQQQMQEAAELLDFELAAQIRDVILELKAID</sequence>
<gene>
    <name evidence="1" type="primary">uvrB</name>
    <name type="ordered locus">SAG1464</name>
</gene>